<protein>
    <recommendedName>
        <fullName evidence="1">D-serine dehydratase</fullName>
        <ecNumber evidence="1">4.3.1.18</ecNumber>
    </recommendedName>
    <alternativeName>
        <fullName evidence="1">D-serine deaminase</fullName>
        <shortName evidence="1">DSD</shortName>
    </alternativeName>
</protein>
<evidence type="ECO:0000255" key="1">
    <source>
        <dbReference type="HAMAP-Rule" id="MF_01030"/>
    </source>
</evidence>
<feature type="chain" id="PRO_1000084242" description="D-serine dehydratase">
    <location>
        <begin position="1"/>
        <end position="440"/>
    </location>
</feature>
<feature type="modified residue" description="N6-(pyridoxal phosphate)lysine" evidence="1">
    <location>
        <position position="116"/>
    </location>
</feature>
<keyword id="KW-0456">Lyase</keyword>
<keyword id="KW-0663">Pyridoxal phosphate</keyword>
<keyword id="KW-1185">Reference proteome</keyword>
<comment type="catalytic activity">
    <reaction evidence="1">
        <text>D-serine = pyruvate + NH4(+)</text>
        <dbReference type="Rhea" id="RHEA:13977"/>
        <dbReference type="ChEBI" id="CHEBI:15361"/>
        <dbReference type="ChEBI" id="CHEBI:28938"/>
        <dbReference type="ChEBI" id="CHEBI:35247"/>
        <dbReference type="EC" id="4.3.1.18"/>
    </reaction>
</comment>
<comment type="cofactor">
    <cofactor evidence="1">
        <name>pyridoxal 5'-phosphate</name>
        <dbReference type="ChEBI" id="CHEBI:597326"/>
    </cofactor>
</comment>
<comment type="subunit">
    <text evidence="1">Monomer.</text>
</comment>
<comment type="similarity">
    <text evidence="1">Belongs to the serine/threonine dehydratase family. DsdA subfamily.</text>
</comment>
<reference key="1">
    <citation type="submission" date="2007-11" db="EMBL/GenBank/DDBJ databases">
        <authorList>
            <consortium name="The Salmonella enterica serovar Arizonae Genome Sequencing Project"/>
            <person name="McClelland M."/>
            <person name="Sanderson E.K."/>
            <person name="Porwollik S."/>
            <person name="Spieth J."/>
            <person name="Clifton W.S."/>
            <person name="Fulton R."/>
            <person name="Chunyan W."/>
            <person name="Wollam A."/>
            <person name="Shah N."/>
            <person name="Pepin K."/>
            <person name="Bhonagiri V."/>
            <person name="Nash W."/>
            <person name="Johnson M."/>
            <person name="Thiruvilangam P."/>
            <person name="Wilson R."/>
        </authorList>
    </citation>
    <scope>NUCLEOTIDE SEQUENCE [LARGE SCALE GENOMIC DNA]</scope>
    <source>
        <strain>ATCC BAA-731 / CDC346-86 / RSK2980</strain>
    </source>
</reference>
<dbReference type="EC" id="4.3.1.18" evidence="1"/>
<dbReference type="EMBL" id="CP000880">
    <property type="protein sequence ID" value="ABX23641.1"/>
    <property type="molecule type" value="Genomic_DNA"/>
</dbReference>
<dbReference type="SMR" id="A9MKH2"/>
<dbReference type="STRING" id="41514.SARI_03847"/>
<dbReference type="KEGG" id="ses:SARI_03847"/>
<dbReference type="HOGENOM" id="CLU_035707_0_0_6"/>
<dbReference type="Proteomes" id="UP000002084">
    <property type="component" value="Chromosome"/>
</dbReference>
<dbReference type="GO" id="GO:0008721">
    <property type="term" value="F:D-serine ammonia-lyase activity"/>
    <property type="evidence" value="ECO:0007669"/>
    <property type="project" value="UniProtKB-EC"/>
</dbReference>
<dbReference type="GO" id="GO:0016836">
    <property type="term" value="F:hydro-lyase activity"/>
    <property type="evidence" value="ECO:0007669"/>
    <property type="project" value="UniProtKB-UniRule"/>
</dbReference>
<dbReference type="GO" id="GO:0030170">
    <property type="term" value="F:pyridoxal phosphate binding"/>
    <property type="evidence" value="ECO:0007669"/>
    <property type="project" value="InterPro"/>
</dbReference>
<dbReference type="GO" id="GO:0036088">
    <property type="term" value="P:D-serine catabolic process"/>
    <property type="evidence" value="ECO:0007669"/>
    <property type="project" value="TreeGrafter"/>
</dbReference>
<dbReference type="GO" id="GO:0009097">
    <property type="term" value="P:isoleucine biosynthetic process"/>
    <property type="evidence" value="ECO:0007669"/>
    <property type="project" value="TreeGrafter"/>
</dbReference>
<dbReference type="CDD" id="cd06447">
    <property type="entry name" value="D-Ser-dehyd"/>
    <property type="match status" value="1"/>
</dbReference>
<dbReference type="FunFam" id="3.40.50.1100:FF:000018">
    <property type="entry name" value="D-serine dehydratase"/>
    <property type="match status" value="1"/>
</dbReference>
<dbReference type="Gene3D" id="3.40.50.1100">
    <property type="match status" value="2"/>
</dbReference>
<dbReference type="HAMAP" id="MF_01030">
    <property type="entry name" value="D_Ser_dehydrat"/>
    <property type="match status" value="1"/>
</dbReference>
<dbReference type="InterPro" id="IPR011780">
    <property type="entry name" value="D_Ser_am_lyase"/>
</dbReference>
<dbReference type="InterPro" id="IPR050147">
    <property type="entry name" value="Ser/Thr_Dehydratase"/>
</dbReference>
<dbReference type="InterPro" id="IPR000634">
    <property type="entry name" value="Ser/Thr_deHydtase_PyrdxlP-BS"/>
</dbReference>
<dbReference type="InterPro" id="IPR001926">
    <property type="entry name" value="TrpB-like_PALP"/>
</dbReference>
<dbReference type="InterPro" id="IPR036052">
    <property type="entry name" value="TrpB-like_PALP_sf"/>
</dbReference>
<dbReference type="NCBIfam" id="TIGR02035">
    <property type="entry name" value="D_Ser_am_lyase"/>
    <property type="match status" value="1"/>
</dbReference>
<dbReference type="NCBIfam" id="NF002823">
    <property type="entry name" value="PRK02991.1"/>
    <property type="match status" value="1"/>
</dbReference>
<dbReference type="PANTHER" id="PTHR48078:SF9">
    <property type="entry name" value="D-SERINE DEHYDRATASE"/>
    <property type="match status" value="1"/>
</dbReference>
<dbReference type="PANTHER" id="PTHR48078">
    <property type="entry name" value="THREONINE DEHYDRATASE, MITOCHONDRIAL-RELATED"/>
    <property type="match status" value="1"/>
</dbReference>
<dbReference type="Pfam" id="PF00291">
    <property type="entry name" value="PALP"/>
    <property type="match status" value="1"/>
</dbReference>
<dbReference type="SUPFAM" id="SSF53686">
    <property type="entry name" value="Tryptophan synthase beta subunit-like PLP-dependent enzymes"/>
    <property type="match status" value="1"/>
</dbReference>
<dbReference type="PROSITE" id="PS00165">
    <property type="entry name" value="DEHYDRATASE_SER_THR"/>
    <property type="match status" value="1"/>
</dbReference>
<accession>A9MKH2</accession>
<proteinExistence type="inferred from homology"/>
<name>SDHD_SALAR</name>
<organism>
    <name type="scientific">Salmonella arizonae (strain ATCC BAA-731 / CDC346-86 / RSK2980)</name>
    <dbReference type="NCBI Taxonomy" id="41514"/>
    <lineage>
        <taxon>Bacteria</taxon>
        <taxon>Pseudomonadati</taxon>
        <taxon>Pseudomonadota</taxon>
        <taxon>Gammaproteobacteria</taxon>
        <taxon>Enterobacterales</taxon>
        <taxon>Enterobacteriaceae</taxon>
        <taxon>Salmonella</taxon>
    </lineage>
</organism>
<gene>
    <name evidence="1" type="primary">dsdA</name>
    <name type="ordered locus">SARI_03847</name>
</gene>
<sequence length="440" mass="47210">MENIQKLIARYPLVADLVALKETTWFNPGATSLAQGLPYVGLTEQDVNAAHDRLARFAPYLAKAFPETAAAGGMIESDMVAIPAMQKRLEKEYGQTIDGEMLLKKDSHLAISGSIKARGGIYEVLTHAEKLALEAGLLTTDDDYSVLLSPGFKQFFSRYSIAVGSTGNLGLSIGIMSACIGFKVTVHMSADARAWKKAKLRRHGVTVVEYEDDYGVAVEQGRKAAQADPNCFFIDDENSRTLFLGYAVAGQRLKAQFAQQGRVVDASHPLFVYLPCGVGGGPGGVAFGLKLAFGDNVHCFFAEPTHSPCMLLGVYTGLHDAISVQDIGIDNLTAADGLAVGRASGFVGRAMERLLDGLYTLDDQTMYDMLGWLAQEEGIRLEPSALAGMAGPQRICAAAAYPQKLGFGQALLDNATHLVWATGGGMVPEDEMEQYLAKGR</sequence>